<keyword id="KW-0472">Membrane</keyword>
<keyword id="KW-1185">Reference proteome</keyword>
<keyword id="KW-0812">Transmembrane</keyword>
<keyword id="KW-1133">Transmembrane helix</keyword>
<keyword id="KW-0813">Transport</keyword>
<reference key="1">
    <citation type="submission" date="2003-12" db="EMBL/GenBank/DDBJ databases">
        <title>The yellow stripe-like (YSL) family of metal-nicotianamine transporters.</title>
        <authorList>
            <person name="Roberts L.A."/>
            <person name="Walker E.L."/>
        </authorList>
    </citation>
    <scope>NUCLEOTIDE SEQUENCE [MRNA]</scope>
</reference>
<reference key="2">
    <citation type="journal article" date="2000" name="DNA Res.">
        <title>Structural analysis of Arabidopsis thaliana chromosome 3. I. Sequence features of the regions of 4,504,864 bp covered by sixty P1 and TAC clones.</title>
        <authorList>
            <person name="Sato S."/>
            <person name="Nakamura Y."/>
            <person name="Kaneko T."/>
            <person name="Katoh T."/>
            <person name="Asamizu E."/>
            <person name="Tabata S."/>
        </authorList>
    </citation>
    <scope>NUCLEOTIDE SEQUENCE [LARGE SCALE GENOMIC DNA]</scope>
    <source>
        <strain>cv. Columbia</strain>
    </source>
</reference>
<reference key="3">
    <citation type="journal article" date="2017" name="Plant J.">
        <title>Araport11: a complete reannotation of the Arabidopsis thaliana reference genome.</title>
        <authorList>
            <person name="Cheng C.Y."/>
            <person name="Krishnakumar V."/>
            <person name="Chan A.P."/>
            <person name="Thibaud-Nissen F."/>
            <person name="Schobel S."/>
            <person name="Town C.D."/>
        </authorList>
    </citation>
    <scope>GENOME REANNOTATION</scope>
    <source>
        <strain>cv. Columbia</strain>
    </source>
</reference>
<reference key="4">
    <citation type="journal article" date="2003" name="Science">
        <title>Empirical analysis of transcriptional activity in the Arabidopsis genome.</title>
        <authorList>
            <person name="Yamada K."/>
            <person name="Lim J."/>
            <person name="Dale J.M."/>
            <person name="Chen H."/>
            <person name="Shinn P."/>
            <person name="Palm C.J."/>
            <person name="Southwick A.M."/>
            <person name="Wu H.C."/>
            <person name="Kim C.J."/>
            <person name="Nguyen M."/>
            <person name="Pham P.K."/>
            <person name="Cheuk R.F."/>
            <person name="Karlin-Newmann G."/>
            <person name="Liu S.X."/>
            <person name="Lam B."/>
            <person name="Sakano H."/>
            <person name="Wu T."/>
            <person name="Yu G."/>
            <person name="Miranda M."/>
            <person name="Quach H.L."/>
            <person name="Tripp M."/>
            <person name="Chang C.H."/>
            <person name="Lee J.M."/>
            <person name="Toriumi M.J."/>
            <person name="Chan M.M."/>
            <person name="Tang C.C."/>
            <person name="Onodera C.S."/>
            <person name="Deng J.M."/>
            <person name="Akiyama K."/>
            <person name="Ansari Y."/>
            <person name="Arakawa T."/>
            <person name="Banh J."/>
            <person name="Banno F."/>
            <person name="Bowser L."/>
            <person name="Brooks S.Y."/>
            <person name="Carninci P."/>
            <person name="Chao Q."/>
            <person name="Choy N."/>
            <person name="Enju A."/>
            <person name="Goldsmith A.D."/>
            <person name="Gurjal M."/>
            <person name="Hansen N.F."/>
            <person name="Hayashizaki Y."/>
            <person name="Johnson-Hopson C."/>
            <person name="Hsuan V.W."/>
            <person name="Iida K."/>
            <person name="Karnes M."/>
            <person name="Khan S."/>
            <person name="Koesema E."/>
            <person name="Ishida J."/>
            <person name="Jiang P.X."/>
            <person name="Jones T."/>
            <person name="Kawai J."/>
            <person name="Kamiya A."/>
            <person name="Meyers C."/>
            <person name="Nakajima M."/>
            <person name="Narusaka M."/>
            <person name="Seki M."/>
            <person name="Sakurai T."/>
            <person name="Satou M."/>
            <person name="Tamse R."/>
            <person name="Vaysberg M."/>
            <person name="Wallender E.K."/>
            <person name="Wong C."/>
            <person name="Yamamura Y."/>
            <person name="Yuan S."/>
            <person name="Shinozaki K."/>
            <person name="Davis R.W."/>
            <person name="Theologis A."/>
            <person name="Ecker J.R."/>
        </authorList>
    </citation>
    <scope>NUCLEOTIDE SEQUENCE [LARGE SCALE MRNA]</scope>
    <source>
        <strain>cv. Columbia</strain>
    </source>
</reference>
<reference key="5">
    <citation type="journal article" date="2009" name="Plant Physiol.">
        <title>Large-scale Arabidopsis phosphoproteome profiling reveals novel chloroplast kinase substrates and phosphorylation networks.</title>
        <authorList>
            <person name="Reiland S."/>
            <person name="Messerli G."/>
            <person name="Baerenfaller K."/>
            <person name="Gerrits B."/>
            <person name="Endler A."/>
            <person name="Grossmann J."/>
            <person name="Gruissem W."/>
            <person name="Baginsky S."/>
        </authorList>
    </citation>
    <scope>IDENTIFICATION BY MASS SPECTROMETRY [LARGE SCALE ANALYSIS]</scope>
</reference>
<accession>Q9LUN2</accession>
<accession>Q93ZI8</accession>
<protein>
    <recommendedName>
        <fullName>Probable metal-nicotianamine transporter YSL5</fullName>
    </recommendedName>
    <alternativeName>
        <fullName>Protein YELLOW STRIPE LIKE 5</fullName>
        <shortName>AtYSL5</shortName>
    </alternativeName>
</protein>
<proteinExistence type="evidence at protein level"/>
<name>YSL5_ARATH</name>
<comment type="function">
    <text evidence="1">May be involved in the transport of nicotianamine-chelated metals.</text>
</comment>
<comment type="subcellular location">
    <subcellularLocation>
        <location evidence="4">Membrane</location>
        <topology evidence="4">Multi-pass membrane protein</topology>
    </subcellularLocation>
</comment>
<comment type="similarity">
    <text evidence="4">Belongs to the YSL (TC 2.A.67.2) family.</text>
</comment>
<gene>
    <name type="primary">YSL5</name>
    <name type="ordered locus">At3g17650</name>
    <name type="ORF">MKP6.21</name>
    <name type="ORF">MKP6_20</name>
</gene>
<dbReference type="EMBL" id="AY515563">
    <property type="protein sequence ID" value="AAS00694.1"/>
    <property type="molecule type" value="mRNA"/>
</dbReference>
<dbReference type="EMBL" id="AB022219">
    <property type="protein sequence ID" value="BAB02055.1"/>
    <property type="molecule type" value="Genomic_DNA"/>
</dbReference>
<dbReference type="EMBL" id="CP002686">
    <property type="protein sequence ID" value="AEE75985.1"/>
    <property type="molecule type" value="Genomic_DNA"/>
</dbReference>
<dbReference type="EMBL" id="CP002686">
    <property type="protein sequence ID" value="ANM63670.1"/>
    <property type="molecule type" value="Genomic_DNA"/>
</dbReference>
<dbReference type="EMBL" id="AY057503">
    <property type="protein sequence ID" value="AAL09744.1"/>
    <property type="molecule type" value="mRNA"/>
</dbReference>
<dbReference type="EMBL" id="BT001087">
    <property type="protein sequence ID" value="AAN46868.1"/>
    <property type="molecule type" value="mRNA"/>
</dbReference>
<dbReference type="RefSeq" id="NP_001325744.1">
    <property type="nucleotide sequence ID" value="NM_001338296.1"/>
</dbReference>
<dbReference type="RefSeq" id="NP_566584.1">
    <property type="nucleotide sequence ID" value="NM_112646.2"/>
</dbReference>
<dbReference type="SMR" id="Q9LUN2"/>
<dbReference type="BioGRID" id="6365">
    <property type="interactions" value="9"/>
</dbReference>
<dbReference type="FunCoup" id="Q9LUN2">
    <property type="interactions" value="612"/>
</dbReference>
<dbReference type="IntAct" id="Q9LUN2">
    <property type="interactions" value="9"/>
</dbReference>
<dbReference type="STRING" id="3702.Q9LUN2"/>
<dbReference type="iPTMnet" id="Q9LUN2"/>
<dbReference type="PaxDb" id="3702-AT3G17650.1"/>
<dbReference type="ProteomicsDB" id="242921"/>
<dbReference type="EnsemblPlants" id="AT3G17650.1">
    <property type="protein sequence ID" value="AT3G17650.1"/>
    <property type="gene ID" value="AT3G17650"/>
</dbReference>
<dbReference type="EnsemblPlants" id="AT3G17650.2">
    <property type="protein sequence ID" value="AT3G17650.2"/>
    <property type="gene ID" value="AT3G17650"/>
</dbReference>
<dbReference type="GeneID" id="821032"/>
<dbReference type="Gramene" id="AT3G17650.1">
    <property type="protein sequence ID" value="AT3G17650.1"/>
    <property type="gene ID" value="AT3G17650"/>
</dbReference>
<dbReference type="Gramene" id="AT3G17650.2">
    <property type="protein sequence ID" value="AT3G17650.2"/>
    <property type="gene ID" value="AT3G17650"/>
</dbReference>
<dbReference type="KEGG" id="ath:AT3G17650"/>
<dbReference type="Araport" id="AT3G17650"/>
<dbReference type="TAIR" id="AT3G17650">
    <property type="gene designation" value="YSL5"/>
</dbReference>
<dbReference type="eggNOG" id="ENOG502QUDW">
    <property type="taxonomic scope" value="Eukaryota"/>
</dbReference>
<dbReference type="HOGENOM" id="CLU_015477_2_0_1"/>
<dbReference type="InParanoid" id="Q9LUN2"/>
<dbReference type="OMA" id="CATNLYA"/>
<dbReference type="OrthoDB" id="627262at2759"/>
<dbReference type="PhylomeDB" id="Q9LUN2"/>
<dbReference type="PRO" id="PR:Q9LUN2"/>
<dbReference type="Proteomes" id="UP000006548">
    <property type="component" value="Chromosome 3"/>
</dbReference>
<dbReference type="ExpressionAtlas" id="Q9LUN2">
    <property type="expression patterns" value="baseline and differential"/>
</dbReference>
<dbReference type="GO" id="GO:0016020">
    <property type="term" value="C:membrane"/>
    <property type="evidence" value="ECO:0007669"/>
    <property type="project" value="UniProtKB-SubCell"/>
</dbReference>
<dbReference type="GO" id="GO:0035673">
    <property type="term" value="F:oligopeptide transmembrane transporter activity"/>
    <property type="evidence" value="ECO:0007669"/>
    <property type="project" value="InterPro"/>
</dbReference>
<dbReference type="InterPro" id="IPR004813">
    <property type="entry name" value="OPT"/>
</dbReference>
<dbReference type="InterPro" id="IPR045035">
    <property type="entry name" value="YSL-like"/>
</dbReference>
<dbReference type="NCBIfam" id="TIGR00728">
    <property type="entry name" value="OPT_sfam"/>
    <property type="match status" value="1"/>
</dbReference>
<dbReference type="PANTHER" id="PTHR31645:SF62">
    <property type="entry name" value="METAL-NICOTIANAMINE TRANSPORTER YSL5-RELATED"/>
    <property type="match status" value="1"/>
</dbReference>
<dbReference type="PANTHER" id="PTHR31645">
    <property type="entry name" value="OLIGOPEPTIDE TRANSPORTER YGL114W-RELATED"/>
    <property type="match status" value="1"/>
</dbReference>
<dbReference type="Pfam" id="PF03169">
    <property type="entry name" value="OPT"/>
    <property type="match status" value="1"/>
</dbReference>
<organism>
    <name type="scientific">Arabidopsis thaliana</name>
    <name type="common">Mouse-ear cress</name>
    <dbReference type="NCBI Taxonomy" id="3702"/>
    <lineage>
        <taxon>Eukaryota</taxon>
        <taxon>Viridiplantae</taxon>
        <taxon>Streptophyta</taxon>
        <taxon>Embryophyta</taxon>
        <taxon>Tracheophyta</taxon>
        <taxon>Spermatophyta</taxon>
        <taxon>Magnoliopsida</taxon>
        <taxon>eudicotyledons</taxon>
        <taxon>Gunneridae</taxon>
        <taxon>Pentapetalae</taxon>
        <taxon>rosids</taxon>
        <taxon>malvids</taxon>
        <taxon>Brassicales</taxon>
        <taxon>Brassicaceae</taxon>
        <taxon>Camelineae</taxon>
        <taxon>Arabidopsis</taxon>
    </lineage>
</organism>
<evidence type="ECO:0000250" key="1"/>
<evidence type="ECO:0000255" key="2"/>
<evidence type="ECO:0000256" key="3">
    <source>
        <dbReference type="SAM" id="MobiDB-lite"/>
    </source>
</evidence>
<evidence type="ECO:0000305" key="4"/>
<feature type="chain" id="PRO_0000311416" description="Probable metal-nicotianamine transporter YSL5">
    <location>
        <begin position="1"/>
        <end position="714"/>
    </location>
</feature>
<feature type="transmembrane region" description="Helical" evidence="2">
    <location>
        <begin position="67"/>
        <end position="87"/>
    </location>
</feature>
<feature type="transmembrane region" description="Helical" evidence="2">
    <location>
        <begin position="90"/>
        <end position="110"/>
    </location>
</feature>
<feature type="transmembrane region" description="Helical" evidence="2">
    <location>
        <begin position="135"/>
        <end position="155"/>
    </location>
</feature>
<feature type="transmembrane region" description="Helical" evidence="2">
    <location>
        <begin position="175"/>
        <end position="195"/>
    </location>
</feature>
<feature type="transmembrane region" description="Helical" evidence="2">
    <location>
        <begin position="236"/>
        <end position="256"/>
    </location>
</feature>
<feature type="transmembrane region" description="Helical" evidence="2">
    <location>
        <begin position="295"/>
        <end position="315"/>
    </location>
</feature>
<feature type="transmembrane region" description="Helical" evidence="2">
    <location>
        <begin position="340"/>
        <end position="360"/>
    </location>
</feature>
<feature type="transmembrane region" description="Helical" evidence="2">
    <location>
        <begin position="413"/>
        <end position="433"/>
    </location>
</feature>
<feature type="transmembrane region" description="Helical" evidence="2">
    <location>
        <begin position="445"/>
        <end position="465"/>
    </location>
</feature>
<feature type="transmembrane region" description="Helical" evidence="2">
    <location>
        <begin position="477"/>
        <end position="497"/>
    </location>
</feature>
<feature type="transmembrane region" description="Helical" evidence="2">
    <location>
        <begin position="531"/>
        <end position="551"/>
    </location>
</feature>
<feature type="transmembrane region" description="Helical" evidence="2">
    <location>
        <begin position="593"/>
        <end position="613"/>
    </location>
</feature>
<feature type="transmembrane region" description="Helical" evidence="2">
    <location>
        <begin position="631"/>
        <end position="651"/>
    </location>
</feature>
<feature type="region of interest" description="Disordered" evidence="3">
    <location>
        <begin position="17"/>
        <end position="44"/>
    </location>
</feature>
<feature type="compositionally biased region" description="Basic and acidic residues" evidence="3">
    <location>
        <begin position="27"/>
        <end position="36"/>
    </location>
</feature>
<feature type="sequence conflict" description="In Ref. 4; AAN46868/AAL09744." evidence="4" ref="4">
    <original>P</original>
    <variation>T</variation>
    <location>
        <position position="224"/>
    </location>
</feature>
<sequence length="714" mass="78853">MRKGVLNPDRDRQIVEHELQETGFSPETEKVKNKNFEEDEEEEDESVEKIFESREVPSWKKQLTVRAFVVSFMLSILFSFIVMKLNLTTGIIPSLNVSAGLLGFFFVKTWTKMLHRSGLLKQPFTRQENTVIQTCVVASSGIAFSGGFGTYLFGMSERIATQSGDVSRGVKDPSLGWIIGFLFVVSFLGLFSVVPLRKIMVIDFKLTYPSGTATAHLINSFHTPQGAKLAKKQVRVLGKFFSLSFFWSFFQWFFTGGENCGFSNFPTFGLKAYQYKFYFDFSATYVGVGMICPYIINISVLLGGILSWGIMWPLIETKKGDWFPDNVPSSSMHGLQAYKVFIAVAIILGDGLYNFCKVLSRTLSGLFVQLRGPTTSISRTSFTLEEDPHASPLSPKQSYDDQRRTRFFLKDQIPTWFAVGGYITIAATSTAILPHMFHQLRWYYILVIYICAPVLAFCNAYGAGLTDWSLASTYGKLAIFTIGAWAGSEHGGMLAGLAACGVMMNIVSTASDLTQDFKTGYLTLSSPKSMFVSQVIGTAMGCVVSPCVFWLFYKAFDDLGLPNTEYPAPFATVYRSMAKLGVEGVASLPRECLVLCYAFFGVAILVNIVKDSLHSNWGRFIPLPMAMAIPFFLGPYFAIDMCVGSLILFIWERVDAAKAEAFGTAVASGLICGDGIWSLPSSVLAIAGVNPPVCMKFLSSATNSKVDNFLKGSI</sequence>